<gene>
    <name evidence="1" type="primary">ybeY</name>
    <name type="ordered locus">Aave_4242</name>
</gene>
<keyword id="KW-0963">Cytoplasm</keyword>
<keyword id="KW-0255">Endonuclease</keyword>
<keyword id="KW-0378">Hydrolase</keyword>
<keyword id="KW-0479">Metal-binding</keyword>
<keyword id="KW-0540">Nuclease</keyword>
<keyword id="KW-0690">Ribosome biogenesis</keyword>
<keyword id="KW-0698">rRNA processing</keyword>
<keyword id="KW-0862">Zinc</keyword>
<organism>
    <name type="scientific">Paracidovorax citrulli (strain AAC00-1)</name>
    <name type="common">Acidovorax citrulli</name>
    <dbReference type="NCBI Taxonomy" id="397945"/>
    <lineage>
        <taxon>Bacteria</taxon>
        <taxon>Pseudomonadati</taxon>
        <taxon>Pseudomonadota</taxon>
        <taxon>Betaproteobacteria</taxon>
        <taxon>Burkholderiales</taxon>
        <taxon>Comamonadaceae</taxon>
        <taxon>Paracidovorax</taxon>
    </lineage>
</organism>
<proteinExistence type="inferred from homology"/>
<evidence type="ECO:0000255" key="1">
    <source>
        <dbReference type="HAMAP-Rule" id="MF_00009"/>
    </source>
</evidence>
<protein>
    <recommendedName>
        <fullName evidence="1">Endoribonuclease YbeY</fullName>
        <ecNumber evidence="1">3.1.-.-</ecNumber>
    </recommendedName>
</protein>
<name>YBEY_PARC0</name>
<accession>A1TUZ4</accession>
<feature type="chain" id="PRO_0000284150" description="Endoribonuclease YbeY">
    <location>
        <begin position="1"/>
        <end position="152"/>
    </location>
</feature>
<feature type="binding site" evidence="1">
    <location>
        <position position="113"/>
    </location>
    <ligand>
        <name>Zn(2+)</name>
        <dbReference type="ChEBI" id="CHEBI:29105"/>
        <note>catalytic</note>
    </ligand>
</feature>
<feature type="binding site" evidence="1">
    <location>
        <position position="117"/>
    </location>
    <ligand>
        <name>Zn(2+)</name>
        <dbReference type="ChEBI" id="CHEBI:29105"/>
        <note>catalytic</note>
    </ligand>
</feature>
<feature type="binding site" evidence="1">
    <location>
        <position position="123"/>
    </location>
    <ligand>
        <name>Zn(2+)</name>
        <dbReference type="ChEBI" id="CHEBI:29105"/>
        <note>catalytic</note>
    </ligand>
</feature>
<comment type="function">
    <text evidence="1">Single strand-specific metallo-endoribonuclease involved in late-stage 70S ribosome quality control and in maturation of the 3' terminus of the 16S rRNA.</text>
</comment>
<comment type="cofactor">
    <cofactor evidence="1">
        <name>Zn(2+)</name>
        <dbReference type="ChEBI" id="CHEBI:29105"/>
    </cofactor>
    <text evidence="1">Binds 1 zinc ion.</text>
</comment>
<comment type="subcellular location">
    <subcellularLocation>
        <location evidence="1">Cytoplasm</location>
    </subcellularLocation>
</comment>
<comment type="similarity">
    <text evidence="1">Belongs to the endoribonuclease YbeY family.</text>
</comment>
<reference key="1">
    <citation type="submission" date="2006-12" db="EMBL/GenBank/DDBJ databases">
        <title>Complete sequence of Acidovorax avenae subsp. citrulli AAC00-1.</title>
        <authorList>
            <person name="Copeland A."/>
            <person name="Lucas S."/>
            <person name="Lapidus A."/>
            <person name="Barry K."/>
            <person name="Detter J.C."/>
            <person name="Glavina del Rio T."/>
            <person name="Dalin E."/>
            <person name="Tice H."/>
            <person name="Pitluck S."/>
            <person name="Kiss H."/>
            <person name="Brettin T."/>
            <person name="Bruce D."/>
            <person name="Han C."/>
            <person name="Tapia R."/>
            <person name="Gilna P."/>
            <person name="Schmutz J."/>
            <person name="Larimer F."/>
            <person name="Land M."/>
            <person name="Hauser L."/>
            <person name="Kyrpides N."/>
            <person name="Kim E."/>
            <person name="Stahl D."/>
            <person name="Richardson P."/>
        </authorList>
    </citation>
    <scope>NUCLEOTIDE SEQUENCE [LARGE SCALE GENOMIC DNA]</scope>
    <source>
        <strain>AAC00-1</strain>
    </source>
</reference>
<sequence>MALNQLSLSLQFARFPGVEAHRAALPRHAVVRWIRHALSLDAEITVRIVDAEEGQALNREYRHKDYATNVLTFDYAQEPVVMADLVLCAPVVEREAREQNKALHEHYAHLLVHGTLHAQGWDHETSAEDADEMEAYETAIMQELGFADPYAD</sequence>
<dbReference type="EC" id="3.1.-.-" evidence="1"/>
<dbReference type="EMBL" id="CP000512">
    <property type="protein sequence ID" value="ABM34782.1"/>
    <property type="molecule type" value="Genomic_DNA"/>
</dbReference>
<dbReference type="RefSeq" id="WP_011797256.1">
    <property type="nucleotide sequence ID" value="NC_008752.1"/>
</dbReference>
<dbReference type="SMR" id="A1TUZ4"/>
<dbReference type="STRING" id="397945.Aave_4242"/>
<dbReference type="GeneID" id="79789212"/>
<dbReference type="KEGG" id="aav:Aave_4242"/>
<dbReference type="eggNOG" id="COG0319">
    <property type="taxonomic scope" value="Bacteria"/>
</dbReference>
<dbReference type="HOGENOM" id="CLU_106710_0_1_4"/>
<dbReference type="OrthoDB" id="9807740at2"/>
<dbReference type="Proteomes" id="UP000002596">
    <property type="component" value="Chromosome"/>
</dbReference>
<dbReference type="GO" id="GO:0005737">
    <property type="term" value="C:cytoplasm"/>
    <property type="evidence" value="ECO:0007669"/>
    <property type="project" value="UniProtKB-SubCell"/>
</dbReference>
<dbReference type="GO" id="GO:0004222">
    <property type="term" value="F:metalloendopeptidase activity"/>
    <property type="evidence" value="ECO:0007669"/>
    <property type="project" value="InterPro"/>
</dbReference>
<dbReference type="GO" id="GO:0004521">
    <property type="term" value="F:RNA endonuclease activity"/>
    <property type="evidence" value="ECO:0007669"/>
    <property type="project" value="UniProtKB-UniRule"/>
</dbReference>
<dbReference type="GO" id="GO:0008270">
    <property type="term" value="F:zinc ion binding"/>
    <property type="evidence" value="ECO:0007669"/>
    <property type="project" value="UniProtKB-UniRule"/>
</dbReference>
<dbReference type="GO" id="GO:0006364">
    <property type="term" value="P:rRNA processing"/>
    <property type="evidence" value="ECO:0007669"/>
    <property type="project" value="UniProtKB-UniRule"/>
</dbReference>
<dbReference type="Gene3D" id="3.40.390.30">
    <property type="entry name" value="Metalloproteases ('zincins'), catalytic domain"/>
    <property type="match status" value="1"/>
</dbReference>
<dbReference type="HAMAP" id="MF_00009">
    <property type="entry name" value="Endoribonucl_YbeY"/>
    <property type="match status" value="1"/>
</dbReference>
<dbReference type="InterPro" id="IPR023091">
    <property type="entry name" value="MetalPrtase_cat_dom_sf_prd"/>
</dbReference>
<dbReference type="InterPro" id="IPR002036">
    <property type="entry name" value="YbeY"/>
</dbReference>
<dbReference type="InterPro" id="IPR020549">
    <property type="entry name" value="YbeY_CS"/>
</dbReference>
<dbReference type="NCBIfam" id="TIGR00043">
    <property type="entry name" value="rRNA maturation RNase YbeY"/>
    <property type="match status" value="1"/>
</dbReference>
<dbReference type="PANTHER" id="PTHR46986">
    <property type="entry name" value="ENDORIBONUCLEASE YBEY, CHLOROPLASTIC"/>
    <property type="match status" value="1"/>
</dbReference>
<dbReference type="PANTHER" id="PTHR46986:SF1">
    <property type="entry name" value="ENDORIBONUCLEASE YBEY, CHLOROPLASTIC"/>
    <property type="match status" value="1"/>
</dbReference>
<dbReference type="Pfam" id="PF02130">
    <property type="entry name" value="YbeY"/>
    <property type="match status" value="1"/>
</dbReference>
<dbReference type="SUPFAM" id="SSF55486">
    <property type="entry name" value="Metalloproteases ('zincins'), catalytic domain"/>
    <property type="match status" value="1"/>
</dbReference>
<dbReference type="PROSITE" id="PS01306">
    <property type="entry name" value="UPF0054"/>
    <property type="match status" value="1"/>
</dbReference>